<evidence type="ECO:0000255" key="1">
    <source>
        <dbReference type="HAMAP-Rule" id="MF_00048"/>
    </source>
</evidence>
<comment type="similarity">
    <text evidence="1">Belongs to the UPF0102 family.</text>
</comment>
<organism>
    <name type="scientific">Mycobacterium sp. (strain MCS)</name>
    <dbReference type="NCBI Taxonomy" id="164756"/>
    <lineage>
        <taxon>Bacteria</taxon>
        <taxon>Bacillati</taxon>
        <taxon>Actinomycetota</taxon>
        <taxon>Actinomycetes</taxon>
        <taxon>Mycobacteriales</taxon>
        <taxon>Mycobacteriaceae</taxon>
        <taxon>Mycobacterium</taxon>
    </lineage>
</organism>
<sequence length="135" mass="14966">MPSVSVWVRSLAPMTTWTRAAIGALGEDLAVKHLDSLGMRVLERNWRCRYGELDVIAEDPAARAVVFVEVKTRTTDHFGGVAEAVTPQKVRRLRRLAGLWLAGRDERWAAVRIDVIGVRIGRQATPEITHLTGVA</sequence>
<gene>
    <name type="ordered locus">Mmcs_1985</name>
</gene>
<proteinExistence type="inferred from homology"/>
<reference key="1">
    <citation type="submission" date="2006-06" db="EMBL/GenBank/DDBJ databases">
        <title>Complete sequence of chromosome of Mycobacterium sp. MCS.</title>
        <authorList>
            <consortium name="US DOE Joint Genome Institute"/>
            <person name="Copeland A."/>
            <person name="Lucas S."/>
            <person name="Lapidus A."/>
            <person name="Barry K."/>
            <person name="Detter J.C."/>
            <person name="Glavina del Rio T."/>
            <person name="Hammon N."/>
            <person name="Israni S."/>
            <person name="Dalin E."/>
            <person name="Tice H."/>
            <person name="Pitluck S."/>
            <person name="Martinez M."/>
            <person name="Schmutz J."/>
            <person name="Larimer F."/>
            <person name="Land M."/>
            <person name="Hauser L."/>
            <person name="Kyrpides N."/>
            <person name="Kim E."/>
            <person name="Miller C.D."/>
            <person name="Hughes J.E."/>
            <person name="Anderson A.J."/>
            <person name="Sims R.C."/>
            <person name="Richardson P."/>
        </authorList>
    </citation>
    <scope>NUCLEOTIDE SEQUENCE [LARGE SCALE GENOMIC DNA]</scope>
    <source>
        <strain>MCS</strain>
    </source>
</reference>
<accession>Q1BAJ0</accession>
<protein>
    <recommendedName>
        <fullName evidence="1">UPF0102 protein Mmcs_1985</fullName>
    </recommendedName>
</protein>
<feature type="chain" id="PRO_0000336209" description="UPF0102 protein Mmcs_1985">
    <location>
        <begin position="1"/>
        <end position="135"/>
    </location>
</feature>
<name>Y1985_MYCSS</name>
<dbReference type="EMBL" id="CP000384">
    <property type="protein sequence ID" value="ABG08094.1"/>
    <property type="molecule type" value="Genomic_DNA"/>
</dbReference>
<dbReference type="SMR" id="Q1BAJ0"/>
<dbReference type="KEGG" id="mmc:Mmcs_1985"/>
<dbReference type="HOGENOM" id="CLU_115353_2_3_11"/>
<dbReference type="BioCyc" id="MSP164756:G1G6O-2030-MONOMER"/>
<dbReference type="GO" id="GO:0003676">
    <property type="term" value="F:nucleic acid binding"/>
    <property type="evidence" value="ECO:0007669"/>
    <property type="project" value="InterPro"/>
</dbReference>
<dbReference type="CDD" id="cd20736">
    <property type="entry name" value="PoNe_Nuclease"/>
    <property type="match status" value="1"/>
</dbReference>
<dbReference type="Gene3D" id="3.40.1350.10">
    <property type="match status" value="1"/>
</dbReference>
<dbReference type="HAMAP" id="MF_00048">
    <property type="entry name" value="UPF0102"/>
    <property type="match status" value="1"/>
</dbReference>
<dbReference type="InterPro" id="IPR011335">
    <property type="entry name" value="Restrct_endonuc-II-like"/>
</dbReference>
<dbReference type="InterPro" id="IPR011856">
    <property type="entry name" value="tRNA_endonuc-like_dom_sf"/>
</dbReference>
<dbReference type="InterPro" id="IPR003509">
    <property type="entry name" value="UPF0102_YraN-like"/>
</dbReference>
<dbReference type="NCBIfam" id="NF009150">
    <property type="entry name" value="PRK12497.1-3"/>
    <property type="match status" value="1"/>
</dbReference>
<dbReference type="NCBIfam" id="NF009153">
    <property type="entry name" value="PRK12497.3-1"/>
    <property type="match status" value="1"/>
</dbReference>
<dbReference type="NCBIfam" id="NF009154">
    <property type="entry name" value="PRK12497.3-3"/>
    <property type="match status" value="1"/>
</dbReference>
<dbReference type="PANTHER" id="PTHR34039">
    <property type="entry name" value="UPF0102 PROTEIN YRAN"/>
    <property type="match status" value="1"/>
</dbReference>
<dbReference type="PANTHER" id="PTHR34039:SF1">
    <property type="entry name" value="UPF0102 PROTEIN YRAN"/>
    <property type="match status" value="1"/>
</dbReference>
<dbReference type="Pfam" id="PF02021">
    <property type="entry name" value="UPF0102"/>
    <property type="match status" value="1"/>
</dbReference>
<dbReference type="SUPFAM" id="SSF52980">
    <property type="entry name" value="Restriction endonuclease-like"/>
    <property type="match status" value="1"/>
</dbReference>